<accession>Q3TLI0</accession>
<accession>F8VQF9</accession>
<accession>Q811H4</accession>
<feature type="chain" id="PRO_0000331480" description="Trafficking protein particle complex subunit 10">
    <location>
        <begin position="1"/>
        <end position="1258"/>
    </location>
</feature>
<feature type="region of interest" description="Disordered" evidence="3">
    <location>
        <begin position="888"/>
        <end position="913"/>
    </location>
</feature>
<feature type="region of interest" description="Disordered" evidence="3">
    <location>
        <begin position="1201"/>
        <end position="1222"/>
    </location>
</feature>
<feature type="compositionally biased region" description="Basic and acidic residues" evidence="3">
    <location>
        <begin position="901"/>
        <end position="911"/>
    </location>
</feature>
<feature type="compositionally biased region" description="Low complexity" evidence="3">
    <location>
        <begin position="1201"/>
        <end position="1214"/>
    </location>
</feature>
<feature type="modified residue" description="Phosphoserine" evidence="7">
    <location>
        <position position="707"/>
    </location>
</feature>
<feature type="sequence conflict" description="In Ref. 3; AAH44902." evidence="6" ref="3">
    <original>Q</original>
    <variation>HS</variation>
    <location>
        <position position="583"/>
    </location>
</feature>
<feature type="sequence conflict" description="In Ref. 3; AAH44902." evidence="6" ref="3">
    <original>S</original>
    <variation>N</variation>
    <location>
        <position position="682"/>
    </location>
</feature>
<feature type="sequence conflict" description="In Ref. 3; AAH44902." evidence="6" ref="3">
    <original>T</original>
    <variation>I</variation>
    <location>
        <position position="1046"/>
    </location>
</feature>
<sequence length="1258" mass="141493">MDAPEEPQPPVVYTMENKPIVTCAGDQNLFTSIYPTLSQQLPREPMEWRRSYGRAPKMIHLESNFVQFKEELLPKEGNKALLTFPFLHIYWTECCDTEVYKATVKDDLTKWQNVLKAHSSVDWLIVVVENDAKKKNKTNILPRTSIVDKIRNDFCNKQSDRCVVLSDPLKDSSRTQESWNAFLTKLRTLLLMSFTKNLGKFEDDMRTLREKRTEPGWSFCEYFMVQEELAFVFEMLQQFEDALVQYDELDALFSQYVVNFGAGDGANWLTFFCQPVKSWNGLVLRKPIDMEKRELIQKQEATLLDLRSYLFSRQCTLLLFLQRPWEVAQRALELLHSCVQELKLLEVSVPPGALDCWVFLSCLEVLQRIEGCCDRAQIDSNIAHMVGLWSYAMEKLKSLGYLCGLVSEKGPNSEDLNRTVDLLAGLGAERPETANTAQSPYKKLQEALSSVEAFEKHYLDLSHATIEMYTSIGRIRSAKLVGKDLAEFYMRKRSPQKAEMYLQGALKNYLAEGWALPVTHTRKQLAECQKHLGQMENYLQTSSLLASDHHLTEEERKYFCQEILSFASQQEDNPGHKVVLPMQFARLKDLHFDPPNAVVHAGGVLTVEITVCSQMPIPVHVDQIAVNVHFSIEKNNYRKTAEWLTKHKTSNGIITFPAEASLFPASQNSLPALELSEMLERSPSDNSLNTTGIICRNVHMLLRRQESGSSLEPPSGLALEDGAHVLRCSSVTLQPGANKIAFKTQAKEPGTYTLRQLRASVGPVWFVLAHIHPIVQYDVYSQEPQLHVEPLADSLLAGIPQKVKFTVTTGHYTVKNGDSLQLSNVEAMLILCQAENRAVVYSNSREECSTALLRIQSSDKVTSIGLPTAPAYHVIEFELEVLSLPSAPASGGDTSVPGTPELHRKQKDSQRAGHCMVTTDHKVSIDCPWSIYSTVIALTFSVPFRTEHSLLSAGTRKYVQVCVQNLSELDFELSDSNLEDKGHATDLRLAPLNTQSQQLIHSKQSVFFVWELTWTQEPPPPLHCQFSVGFSPASEEQLTVSLKPYTYEFQVENFFTLYSVRAEILPASGAEYCKTGSLCSLEVSITRLADLLDVDKDEALVESEDYFSTKLMYEVVDNSSNWAVCGKSCGVIAMPLAAQATHRVHMEVMPLFAGYLPLPDVRLFKYLPHHSAHASQLDADSWIENDSLSVDKHLDDQLDCSSLRSRGSTHSTSSSEHKGLPMPRLQALPAGQVFNSSTGMQVLVIPSQDDHVLEVSVT</sequence>
<protein>
    <recommendedName>
        <fullName>Trafficking protein particle complex subunit 10</fullName>
    </recommendedName>
    <alternativeName>
        <fullName>Trafficking protein particle complex subunit TMEM1</fullName>
    </alternativeName>
    <alternativeName>
        <fullName>Transport protein particle subunit TMEM1</fullName>
        <shortName>TRAPP subunit TMEM1</shortName>
    </alternativeName>
</protein>
<organism>
    <name type="scientific">Mus musculus</name>
    <name type="common">Mouse</name>
    <dbReference type="NCBI Taxonomy" id="10090"/>
    <lineage>
        <taxon>Eukaryota</taxon>
        <taxon>Metazoa</taxon>
        <taxon>Chordata</taxon>
        <taxon>Craniata</taxon>
        <taxon>Vertebrata</taxon>
        <taxon>Euteleostomi</taxon>
        <taxon>Mammalia</taxon>
        <taxon>Eutheria</taxon>
        <taxon>Euarchontoglires</taxon>
        <taxon>Glires</taxon>
        <taxon>Rodentia</taxon>
        <taxon>Myomorpha</taxon>
        <taxon>Muroidea</taxon>
        <taxon>Muridae</taxon>
        <taxon>Murinae</taxon>
        <taxon>Mus</taxon>
        <taxon>Mus</taxon>
    </lineage>
</organism>
<comment type="function">
    <text evidence="2">Specific subunit of the TRAPP (transport protein particle) II complex, a highly conserved vesicle tethering complex that functions in late Golgi trafficking as a membrane tether.</text>
</comment>
<comment type="subunit">
    <text evidence="2 4">Specific component of the multisubunit TRAPP II complex, which includes at least TRAPPC1, TRAPPC2, TRAPPC3, TRAPPC4, TRAPPC5, TRAPPC6A/B, TRAPPC9, TRAPPC10 and TRAPPC14. TRAPPC9, TRAPPC10 and TRAPPC14 are specific subunits of the TRAPP II complex (PubMed:19656848). Interacts with TRAPPC14 (By similarity).</text>
</comment>
<comment type="subcellular location">
    <subcellularLocation>
        <location evidence="1">Golgi apparatus</location>
        <location evidence="1">cis-Golgi network</location>
    </subcellularLocation>
</comment>
<comment type="disruption phenotype">
    <text evidence="5">Gene-null mice have smaller total brain area compared to wild-type animals, with specific reductions in the size of the corpus callosum, regions of the hippocampus, anterior commissure, and internal capsule. Only white matter structures are affected in mutant mice. There is a loss of myelination in these regions, but oligodendrocyte numbers are normal.</text>
</comment>
<comment type="similarity">
    <text evidence="6">Belongs to the TRAPPC10 family.</text>
</comment>
<gene>
    <name type="primary">Trappc10</name>
    <name type="synonym">Tmem1</name>
</gene>
<name>TPC10_MOUSE</name>
<proteinExistence type="evidence at protein level"/>
<evidence type="ECO:0000250" key="1"/>
<evidence type="ECO:0000250" key="2">
    <source>
        <dbReference type="UniProtKB" id="P48553"/>
    </source>
</evidence>
<evidence type="ECO:0000256" key="3">
    <source>
        <dbReference type="SAM" id="MobiDB-lite"/>
    </source>
</evidence>
<evidence type="ECO:0000269" key="4">
    <source>
    </source>
</evidence>
<evidence type="ECO:0000269" key="5">
    <source>
    </source>
</evidence>
<evidence type="ECO:0000305" key="6"/>
<evidence type="ECO:0007744" key="7">
    <source>
    </source>
</evidence>
<keyword id="KW-0931">ER-Golgi transport</keyword>
<keyword id="KW-0333">Golgi apparatus</keyword>
<keyword id="KW-0597">Phosphoprotein</keyword>
<keyword id="KW-1185">Reference proteome</keyword>
<keyword id="KW-0813">Transport</keyword>
<reference key="1">
    <citation type="journal article" date="2005" name="Science">
        <title>The transcriptional landscape of the mammalian genome.</title>
        <authorList>
            <person name="Carninci P."/>
            <person name="Kasukawa T."/>
            <person name="Katayama S."/>
            <person name="Gough J."/>
            <person name="Frith M.C."/>
            <person name="Maeda N."/>
            <person name="Oyama R."/>
            <person name="Ravasi T."/>
            <person name="Lenhard B."/>
            <person name="Wells C."/>
            <person name="Kodzius R."/>
            <person name="Shimokawa K."/>
            <person name="Bajic V.B."/>
            <person name="Brenner S.E."/>
            <person name="Batalov S."/>
            <person name="Forrest A.R."/>
            <person name="Zavolan M."/>
            <person name="Davis M.J."/>
            <person name="Wilming L.G."/>
            <person name="Aidinis V."/>
            <person name="Allen J.E."/>
            <person name="Ambesi-Impiombato A."/>
            <person name="Apweiler R."/>
            <person name="Aturaliya R.N."/>
            <person name="Bailey T.L."/>
            <person name="Bansal M."/>
            <person name="Baxter L."/>
            <person name="Beisel K.W."/>
            <person name="Bersano T."/>
            <person name="Bono H."/>
            <person name="Chalk A.M."/>
            <person name="Chiu K.P."/>
            <person name="Choudhary V."/>
            <person name="Christoffels A."/>
            <person name="Clutterbuck D.R."/>
            <person name="Crowe M.L."/>
            <person name="Dalla E."/>
            <person name="Dalrymple B.P."/>
            <person name="de Bono B."/>
            <person name="Della Gatta G."/>
            <person name="di Bernardo D."/>
            <person name="Down T."/>
            <person name="Engstrom P."/>
            <person name="Fagiolini M."/>
            <person name="Faulkner G."/>
            <person name="Fletcher C.F."/>
            <person name="Fukushima T."/>
            <person name="Furuno M."/>
            <person name="Futaki S."/>
            <person name="Gariboldi M."/>
            <person name="Georgii-Hemming P."/>
            <person name="Gingeras T.R."/>
            <person name="Gojobori T."/>
            <person name="Green R.E."/>
            <person name="Gustincich S."/>
            <person name="Harbers M."/>
            <person name="Hayashi Y."/>
            <person name="Hensch T.K."/>
            <person name="Hirokawa N."/>
            <person name="Hill D."/>
            <person name="Huminiecki L."/>
            <person name="Iacono M."/>
            <person name="Ikeo K."/>
            <person name="Iwama A."/>
            <person name="Ishikawa T."/>
            <person name="Jakt M."/>
            <person name="Kanapin A."/>
            <person name="Katoh M."/>
            <person name="Kawasawa Y."/>
            <person name="Kelso J."/>
            <person name="Kitamura H."/>
            <person name="Kitano H."/>
            <person name="Kollias G."/>
            <person name="Krishnan S.P."/>
            <person name="Kruger A."/>
            <person name="Kummerfeld S.K."/>
            <person name="Kurochkin I.V."/>
            <person name="Lareau L.F."/>
            <person name="Lazarevic D."/>
            <person name="Lipovich L."/>
            <person name="Liu J."/>
            <person name="Liuni S."/>
            <person name="McWilliam S."/>
            <person name="Madan Babu M."/>
            <person name="Madera M."/>
            <person name="Marchionni L."/>
            <person name="Matsuda H."/>
            <person name="Matsuzawa S."/>
            <person name="Miki H."/>
            <person name="Mignone F."/>
            <person name="Miyake S."/>
            <person name="Morris K."/>
            <person name="Mottagui-Tabar S."/>
            <person name="Mulder N."/>
            <person name="Nakano N."/>
            <person name="Nakauchi H."/>
            <person name="Ng P."/>
            <person name="Nilsson R."/>
            <person name="Nishiguchi S."/>
            <person name="Nishikawa S."/>
            <person name="Nori F."/>
            <person name="Ohara O."/>
            <person name="Okazaki Y."/>
            <person name="Orlando V."/>
            <person name="Pang K.C."/>
            <person name="Pavan W.J."/>
            <person name="Pavesi G."/>
            <person name="Pesole G."/>
            <person name="Petrovsky N."/>
            <person name="Piazza S."/>
            <person name="Reed J."/>
            <person name="Reid J.F."/>
            <person name="Ring B.Z."/>
            <person name="Ringwald M."/>
            <person name="Rost B."/>
            <person name="Ruan Y."/>
            <person name="Salzberg S.L."/>
            <person name="Sandelin A."/>
            <person name="Schneider C."/>
            <person name="Schoenbach C."/>
            <person name="Sekiguchi K."/>
            <person name="Semple C.A."/>
            <person name="Seno S."/>
            <person name="Sessa L."/>
            <person name="Sheng Y."/>
            <person name="Shibata Y."/>
            <person name="Shimada H."/>
            <person name="Shimada K."/>
            <person name="Silva D."/>
            <person name="Sinclair B."/>
            <person name="Sperling S."/>
            <person name="Stupka E."/>
            <person name="Sugiura K."/>
            <person name="Sultana R."/>
            <person name="Takenaka Y."/>
            <person name="Taki K."/>
            <person name="Tammoja K."/>
            <person name="Tan S.L."/>
            <person name="Tang S."/>
            <person name="Taylor M.S."/>
            <person name="Tegner J."/>
            <person name="Teichmann S.A."/>
            <person name="Ueda H.R."/>
            <person name="van Nimwegen E."/>
            <person name="Verardo R."/>
            <person name="Wei C.L."/>
            <person name="Yagi K."/>
            <person name="Yamanishi H."/>
            <person name="Zabarovsky E."/>
            <person name="Zhu S."/>
            <person name="Zimmer A."/>
            <person name="Hide W."/>
            <person name="Bult C."/>
            <person name="Grimmond S.M."/>
            <person name="Teasdale R.D."/>
            <person name="Liu E.T."/>
            <person name="Brusic V."/>
            <person name="Quackenbush J."/>
            <person name="Wahlestedt C."/>
            <person name="Mattick J.S."/>
            <person name="Hume D.A."/>
            <person name="Kai C."/>
            <person name="Sasaki D."/>
            <person name="Tomaru Y."/>
            <person name="Fukuda S."/>
            <person name="Kanamori-Katayama M."/>
            <person name="Suzuki M."/>
            <person name="Aoki J."/>
            <person name="Arakawa T."/>
            <person name="Iida J."/>
            <person name="Imamura K."/>
            <person name="Itoh M."/>
            <person name="Kato T."/>
            <person name="Kawaji H."/>
            <person name="Kawagashira N."/>
            <person name="Kawashima T."/>
            <person name="Kojima M."/>
            <person name="Kondo S."/>
            <person name="Konno H."/>
            <person name="Nakano K."/>
            <person name="Ninomiya N."/>
            <person name="Nishio T."/>
            <person name="Okada M."/>
            <person name="Plessy C."/>
            <person name="Shibata K."/>
            <person name="Shiraki T."/>
            <person name="Suzuki S."/>
            <person name="Tagami M."/>
            <person name="Waki K."/>
            <person name="Watahiki A."/>
            <person name="Okamura-Oho Y."/>
            <person name="Suzuki H."/>
            <person name="Kawai J."/>
            <person name="Hayashizaki Y."/>
        </authorList>
    </citation>
    <scope>NUCLEOTIDE SEQUENCE [LARGE SCALE MRNA] OF 1-132</scope>
    <source>
        <tissue>Mammary gland</tissue>
    </source>
</reference>
<reference key="2">
    <citation type="journal article" date="2009" name="PLoS Biol.">
        <title>Lineage-specific biology revealed by a finished genome assembly of the mouse.</title>
        <authorList>
            <person name="Church D.M."/>
            <person name="Goodstadt L."/>
            <person name="Hillier L.W."/>
            <person name="Zody M.C."/>
            <person name="Goldstein S."/>
            <person name="She X."/>
            <person name="Bult C.J."/>
            <person name="Agarwala R."/>
            <person name="Cherry J.L."/>
            <person name="DiCuccio M."/>
            <person name="Hlavina W."/>
            <person name="Kapustin Y."/>
            <person name="Meric P."/>
            <person name="Maglott D."/>
            <person name="Birtle Z."/>
            <person name="Marques A.C."/>
            <person name="Graves T."/>
            <person name="Zhou S."/>
            <person name="Teague B."/>
            <person name="Potamousis K."/>
            <person name="Churas C."/>
            <person name="Place M."/>
            <person name="Herschleb J."/>
            <person name="Runnheim R."/>
            <person name="Forrest D."/>
            <person name="Amos-Landgraf J."/>
            <person name="Schwartz D.C."/>
            <person name="Cheng Z."/>
            <person name="Lindblad-Toh K."/>
            <person name="Eichler E.E."/>
            <person name="Ponting C.P."/>
        </authorList>
    </citation>
    <scope>NUCLEOTIDE SEQUENCE [LARGE SCALE GENOMIC DNA]</scope>
    <source>
        <strain>C57BL/6J</strain>
    </source>
</reference>
<reference key="3">
    <citation type="journal article" date="2004" name="Genome Res.">
        <title>The status, quality, and expansion of the NIH full-length cDNA project: the Mammalian Gene Collection (MGC).</title>
        <authorList>
            <consortium name="The MGC Project Team"/>
        </authorList>
    </citation>
    <scope>NUCLEOTIDE SEQUENCE [LARGE SCALE MRNA] OF 404-1258</scope>
    <source>
        <strain>Czech II</strain>
        <tissue>Mammary tumor</tissue>
    </source>
</reference>
<reference key="4">
    <citation type="journal article" date="2007" name="Proc. Natl. Acad. Sci. U.S.A.">
        <title>Large-scale phosphorylation analysis of mouse liver.</title>
        <authorList>
            <person name="Villen J."/>
            <person name="Beausoleil S.A."/>
            <person name="Gerber S.A."/>
            <person name="Gygi S.P."/>
        </authorList>
    </citation>
    <scope>PHOSPHORYLATION [LARGE SCALE ANALYSIS] AT SER-707</scope>
    <scope>IDENTIFICATION BY MASS SPECTROMETRY [LARGE SCALE ANALYSIS]</scope>
    <source>
        <tissue>Liver</tissue>
    </source>
</reference>
<reference key="5">
    <citation type="journal article" date="2009" name="Immunity">
        <title>The phagosomal proteome in interferon-gamma-activated macrophages.</title>
        <authorList>
            <person name="Trost M."/>
            <person name="English L."/>
            <person name="Lemieux S."/>
            <person name="Courcelles M."/>
            <person name="Desjardins M."/>
            <person name="Thibault P."/>
        </authorList>
    </citation>
    <scope>IDENTIFICATION BY MASS SPECTROMETRY [LARGE SCALE ANALYSIS]</scope>
</reference>
<reference key="6">
    <citation type="journal article" date="2010" name="Cell">
        <title>A tissue-specific atlas of mouse protein phosphorylation and expression.</title>
        <authorList>
            <person name="Huttlin E.L."/>
            <person name="Jedrychowski M.P."/>
            <person name="Elias J.E."/>
            <person name="Goswami T."/>
            <person name="Rad R."/>
            <person name="Beausoleil S.A."/>
            <person name="Villen J."/>
            <person name="Haas W."/>
            <person name="Sowa M.E."/>
            <person name="Gygi S.P."/>
        </authorList>
    </citation>
    <scope>IDENTIFICATION BY MASS SPECTROMETRY [LARGE SCALE ANALYSIS]</scope>
    <source>
        <tissue>Brain</tissue>
        <tissue>Brown adipose tissue</tissue>
        <tissue>Heart</tissue>
        <tissue>Kidney</tissue>
        <tissue>Liver</tissue>
        <tissue>Lung</tissue>
        <tissue>Pancreas</tissue>
        <tissue>Spleen</tissue>
        <tissue>Testis</tissue>
    </source>
</reference>
<reference key="7">
    <citation type="journal article" date="2009" name="Mol. Biol. Cell">
        <title>mTrs130 is a component of a mammalian TRAPPII complex, a Rab1 GEF that binds to COPI-coated vesicles.</title>
        <authorList>
            <person name="Yamasaki A."/>
            <person name="Menon S."/>
            <person name="Yu S."/>
            <person name="Barrowman J."/>
            <person name="Meerloo T."/>
            <person name="Oorschot V."/>
            <person name="Klumperman J."/>
            <person name="Satoh A."/>
            <person name="Ferro-Novick S."/>
        </authorList>
    </citation>
    <scope>IDENTIFICATION IN THE TRAPP II COMPLEX</scope>
</reference>
<reference key="8">
    <citation type="journal article" date="2022" name="PLoS Genet.">
        <title>Biallelic variants in TRAPPC10 cause a microcephalic TRAPPopathy disorder in humans and mice.</title>
        <authorList>
            <person name="Rawlins L.E."/>
            <person name="Almousa H."/>
            <person name="Khan S."/>
            <person name="Collins S.C."/>
            <person name="Milev M.P."/>
            <person name="Leslie J."/>
            <person name="Saint-Dic D."/>
            <person name="Khan V."/>
            <person name="Hincapie A.M."/>
            <person name="Day J.O."/>
            <person name="McGavin L."/>
            <person name="Rowley C."/>
            <person name="Harlalka G.V."/>
            <person name="Vancollie V.E."/>
            <person name="Ahmad W."/>
            <person name="Lelliott C.J."/>
            <person name="Gul A."/>
            <person name="Yalcin B."/>
            <person name="Crosby A.H."/>
            <person name="Sacher M."/>
            <person name="Baple E.L."/>
        </authorList>
    </citation>
    <scope>DISRUPTION PHENOTYPE</scope>
</reference>
<dbReference type="EMBL" id="AK166500">
    <property type="protein sequence ID" value="BAE38812.1"/>
    <property type="molecule type" value="mRNA"/>
</dbReference>
<dbReference type="EMBL" id="BC044902">
    <property type="protein sequence ID" value="AAH44902.1"/>
    <property type="molecule type" value="mRNA"/>
</dbReference>
<dbReference type="EMBL" id="AC164573">
    <property type="status" value="NOT_ANNOTATED_CDS"/>
    <property type="molecule type" value="Genomic_DNA"/>
</dbReference>
<dbReference type="CCDS" id="CCDS35959.1"/>
<dbReference type="RefSeq" id="NP_001074524.1">
    <property type="nucleotide sequence ID" value="NM_001081055.2"/>
</dbReference>
<dbReference type="ComplexPortal" id="CPX-4764">
    <property type="entry name" value="TRAPP II complex"/>
</dbReference>
<dbReference type="FunCoup" id="Q3TLI0">
    <property type="interactions" value="1969"/>
</dbReference>
<dbReference type="IntAct" id="Q3TLI0">
    <property type="interactions" value="1"/>
</dbReference>
<dbReference type="STRING" id="10090.ENSMUSP00000000384"/>
<dbReference type="GlyGen" id="Q3TLI0">
    <property type="glycosylation" value="2 sites, 1 N-linked glycan (1 site), 1 O-linked glycan (1 site)"/>
</dbReference>
<dbReference type="iPTMnet" id="Q3TLI0"/>
<dbReference type="PhosphoSitePlus" id="Q3TLI0"/>
<dbReference type="SwissPalm" id="Q3TLI0"/>
<dbReference type="jPOST" id="Q3TLI0"/>
<dbReference type="PaxDb" id="10090-ENSMUSP00000000384"/>
<dbReference type="ProteomicsDB" id="260725"/>
<dbReference type="ProteomicsDB" id="361417"/>
<dbReference type="Pumba" id="Q3TLI0"/>
<dbReference type="DNASU" id="216131"/>
<dbReference type="Ensembl" id="ENSMUST00000000384.8">
    <property type="protein sequence ID" value="ENSMUSP00000000384.7"/>
    <property type="gene ID" value="ENSMUSG00000000374.9"/>
</dbReference>
<dbReference type="GeneID" id="216131"/>
<dbReference type="KEGG" id="mmu:216131"/>
<dbReference type="AGR" id="MGI:1336209"/>
<dbReference type="CTD" id="7109"/>
<dbReference type="MGI" id="MGI:1336209">
    <property type="gene designation" value="Trappc10"/>
</dbReference>
<dbReference type="VEuPathDB" id="HostDB:ENSMUSG00000000374"/>
<dbReference type="eggNOG" id="KOG1931">
    <property type="taxonomic scope" value="Eukaryota"/>
</dbReference>
<dbReference type="GeneTree" id="ENSGT00390000003873"/>
<dbReference type="HOGENOM" id="CLU_006893_0_0_1"/>
<dbReference type="InParanoid" id="Q3TLI0"/>
<dbReference type="OMA" id="TKVHENP"/>
<dbReference type="OrthoDB" id="10256906at2759"/>
<dbReference type="PhylomeDB" id="Q3TLI0"/>
<dbReference type="TreeFam" id="TF320954"/>
<dbReference type="Reactome" id="R-MMU-204005">
    <property type="pathway name" value="COPII-mediated vesicle transport"/>
</dbReference>
<dbReference type="Reactome" id="R-MMU-8876198">
    <property type="pathway name" value="RAB GEFs exchange GTP for GDP on RABs"/>
</dbReference>
<dbReference type="BioGRID-ORCS" id="216131">
    <property type="hits" value="3 hits in 75 CRISPR screens"/>
</dbReference>
<dbReference type="ChiTaRS" id="Trappc10">
    <property type="organism name" value="mouse"/>
</dbReference>
<dbReference type="PRO" id="PR:Q3TLI0"/>
<dbReference type="Proteomes" id="UP000000589">
    <property type="component" value="Chromosome 10"/>
</dbReference>
<dbReference type="RNAct" id="Q3TLI0">
    <property type="molecule type" value="protein"/>
</dbReference>
<dbReference type="Bgee" id="ENSMUSG00000000374">
    <property type="expression patterns" value="Expressed in paneth cell and 271 other cell types or tissues"/>
</dbReference>
<dbReference type="GO" id="GO:0005737">
    <property type="term" value="C:cytoplasm"/>
    <property type="evidence" value="ECO:0000303"/>
    <property type="project" value="ComplexPortal"/>
</dbReference>
<dbReference type="GO" id="GO:1990071">
    <property type="term" value="C:TRAPPII protein complex"/>
    <property type="evidence" value="ECO:0000303"/>
    <property type="project" value="ComplexPortal"/>
</dbReference>
<dbReference type="GO" id="GO:0006888">
    <property type="term" value="P:endoplasmic reticulum to Golgi vesicle-mediated transport"/>
    <property type="evidence" value="ECO:0000303"/>
    <property type="project" value="ComplexPortal"/>
</dbReference>
<dbReference type="GO" id="GO:0006891">
    <property type="term" value="P:intra-Golgi vesicle-mediated transport"/>
    <property type="evidence" value="ECO:0000250"/>
    <property type="project" value="UniProtKB"/>
</dbReference>
<dbReference type="GO" id="GO:0006901">
    <property type="term" value="P:vesicle coating"/>
    <property type="evidence" value="ECO:0000303"/>
    <property type="project" value="ComplexPortal"/>
</dbReference>
<dbReference type="GO" id="GO:0099022">
    <property type="term" value="P:vesicle tethering"/>
    <property type="evidence" value="ECO:0000303"/>
    <property type="project" value="ComplexPortal"/>
</dbReference>
<dbReference type="InterPro" id="IPR056917">
    <property type="entry name" value="Ig_TRAPPC10"/>
</dbReference>
<dbReference type="InterPro" id="IPR022233">
    <property type="entry name" value="TRAPP_II_complex_TRAPPC10_C"/>
</dbReference>
<dbReference type="InterPro" id="IPR045126">
    <property type="entry name" value="TRAPPC10/Trs130"/>
</dbReference>
<dbReference type="InterPro" id="IPR056913">
    <property type="entry name" value="TRAPPC10/Trs130_N"/>
</dbReference>
<dbReference type="PANTHER" id="PTHR13251">
    <property type="entry name" value="EPILEPSY HOLOPROSENCEPHALY CANDIDATE 1/TMEM1"/>
    <property type="match status" value="1"/>
</dbReference>
<dbReference type="PANTHER" id="PTHR13251:SF3">
    <property type="entry name" value="TRAFFICKING PROTEIN PARTICLE COMPLEX SUBUNIT 10"/>
    <property type="match status" value="1"/>
</dbReference>
<dbReference type="Pfam" id="PF23604">
    <property type="entry name" value="Ig_TRAPPC10"/>
    <property type="match status" value="1"/>
</dbReference>
<dbReference type="Pfam" id="PF12584">
    <property type="entry name" value="TRAPPC10"/>
    <property type="match status" value="1"/>
</dbReference>
<dbReference type="Pfam" id="PF23036">
    <property type="entry name" value="TRAPPC10_1st"/>
    <property type="match status" value="1"/>
</dbReference>